<accession>P28997</accession>
<feature type="chain" id="PRO_0000182739" description="NAD-specific glutamate dehydrogenase">
    <location>
        <begin position="1"/>
        <end position="421"/>
    </location>
</feature>
<feature type="active site" description="Proton donor" evidence="2">
    <location>
        <position position="106"/>
    </location>
</feature>
<feature type="binding site" evidence="1">
    <location>
        <position position="70"/>
    </location>
    <ligand>
        <name>substrate</name>
    </ligand>
</feature>
<feature type="binding site" evidence="1">
    <location>
        <position position="94"/>
    </location>
    <ligand>
        <name>substrate</name>
    </ligand>
</feature>
<feature type="binding site" evidence="1">
    <location>
        <position position="191"/>
    </location>
    <ligand>
        <name>NAD(+)</name>
        <dbReference type="ChEBI" id="CHEBI:57540"/>
    </ligand>
</feature>
<feature type="binding site" evidence="1">
    <location>
        <position position="222"/>
    </location>
    <ligand>
        <name>NAD(+)</name>
        <dbReference type="ChEBI" id="CHEBI:57540"/>
    </ligand>
</feature>
<feature type="binding site" evidence="1">
    <location>
        <position position="355"/>
    </location>
    <ligand>
        <name>substrate</name>
    </ligand>
</feature>
<feature type="site" description="Important for catalysis" evidence="1">
    <location>
        <position position="146"/>
    </location>
</feature>
<feature type="site" description="Important for nucleotide recognition" evidence="3">
    <location>
        <position position="243"/>
    </location>
</feature>
<feature type="mutagenesis site" description="Shows a 9-fold relaxation of the strong discrimination against NADPH due to the decrease of binding affinity for NADH and the increase for NADPH." evidence="3 4">
    <original>E</original>
    <variation>D</variation>
    <location>
        <position position="243"/>
    </location>
</feature>
<feature type="mutagenesis site" description="Severely crippled in its ability to bind to NADH. Decrease of binding affinity for NADH and increase for NADPH." evidence="3 4">
    <original>E</original>
    <variation>K</variation>
    <location>
        <position position="243"/>
    </location>
</feature>
<feature type="mutagenesis site" description="Decrease of binding affinity for NADH and increase for NADPH." evidence="3 4">
    <original>E</original>
    <variation>R</variation>
    <location>
        <position position="243"/>
    </location>
</feature>
<feature type="mutagenesis site" description="Decrease of binding affinity for NADH and increase for NADPH." evidence="3">
    <original>W</original>
    <variation>S</variation>
    <location>
        <position position="244"/>
    </location>
</feature>
<feature type="mutagenesis site" description="Decrease of binding affinity for NADH and increase for NADPH." evidence="3">
    <original>D</original>
    <variation>K</variation>
    <location>
        <position position="245"/>
    </location>
</feature>
<feature type="helix" evidence="7">
    <location>
        <begin position="7"/>
        <end position="22"/>
    </location>
</feature>
<feature type="helix" evidence="7">
    <location>
        <begin position="26"/>
        <end position="32"/>
    </location>
</feature>
<feature type="strand" evidence="7">
    <location>
        <begin position="36"/>
        <end position="47"/>
    </location>
</feature>
<feature type="turn" evidence="7">
    <location>
        <begin position="48"/>
        <end position="50"/>
    </location>
</feature>
<feature type="strand" evidence="7">
    <location>
        <begin position="51"/>
        <end position="61"/>
    </location>
</feature>
<feature type="strand" evidence="7">
    <location>
        <begin position="65"/>
        <end position="78"/>
    </location>
</feature>
<feature type="helix" evidence="7">
    <location>
        <begin position="81"/>
        <end position="98"/>
    </location>
</feature>
<feature type="strand" evidence="7">
    <location>
        <begin position="103"/>
        <end position="110"/>
    </location>
</feature>
<feature type="helix" evidence="7">
    <location>
        <begin position="113"/>
        <end position="115"/>
    </location>
</feature>
<feature type="helix" evidence="7">
    <location>
        <begin position="118"/>
        <end position="132"/>
    </location>
</feature>
<feature type="helix" evidence="7">
    <location>
        <begin position="133"/>
        <end position="135"/>
    </location>
</feature>
<feature type="turn" evidence="7">
    <location>
        <begin position="138"/>
        <end position="140"/>
    </location>
</feature>
<feature type="strand" evidence="7">
    <location>
        <begin position="141"/>
        <end position="145"/>
    </location>
</feature>
<feature type="helix" evidence="7">
    <location>
        <begin position="151"/>
        <end position="164"/>
    </location>
</feature>
<feature type="turn" evidence="7">
    <location>
        <begin position="165"/>
        <end position="167"/>
    </location>
</feature>
<feature type="helix" evidence="7">
    <location>
        <begin position="171"/>
        <end position="173"/>
    </location>
</feature>
<feature type="helix" evidence="7">
    <location>
        <begin position="179"/>
        <end position="181"/>
    </location>
</feature>
<feature type="helix" evidence="7">
    <location>
        <begin position="190"/>
        <end position="205"/>
    </location>
</feature>
<feature type="helix" evidence="7">
    <location>
        <begin position="210"/>
        <end position="212"/>
    </location>
</feature>
<feature type="strand" evidence="7">
    <location>
        <begin position="215"/>
        <end position="218"/>
    </location>
</feature>
<feature type="helix" evidence="7">
    <location>
        <begin position="222"/>
        <end position="233"/>
    </location>
</feature>
<feature type="strand" evidence="7">
    <location>
        <begin position="238"/>
        <end position="240"/>
    </location>
</feature>
<feature type="strand" evidence="7">
    <location>
        <begin position="246"/>
        <end position="248"/>
    </location>
</feature>
<feature type="helix" evidence="7">
    <location>
        <begin position="261"/>
        <end position="271"/>
    </location>
</feature>
<feature type="strand" evidence="7">
    <location>
        <begin position="296"/>
        <end position="298"/>
    </location>
</feature>
<feature type="helix" evidence="7">
    <location>
        <begin position="307"/>
        <end position="310"/>
    </location>
</feature>
<feature type="strand" evidence="7">
    <location>
        <begin position="316"/>
        <end position="319"/>
    </location>
</feature>
<feature type="strand" evidence="7">
    <location>
        <begin position="322"/>
        <end position="324"/>
    </location>
</feature>
<feature type="helix" evidence="7">
    <location>
        <begin position="328"/>
        <end position="337"/>
    </location>
</feature>
<feature type="strand" evidence="7">
    <location>
        <begin position="340"/>
        <end position="342"/>
    </location>
</feature>
<feature type="helix" evidence="7">
    <location>
        <begin position="344"/>
        <end position="347"/>
    </location>
</feature>
<feature type="helix" evidence="7">
    <location>
        <begin position="350"/>
        <end position="364"/>
    </location>
</feature>
<feature type="helix" evidence="7">
    <location>
        <begin position="370"/>
        <end position="394"/>
    </location>
</feature>
<feature type="helix" evidence="7">
    <location>
        <begin position="399"/>
        <end position="418"/>
    </location>
</feature>
<organism>
    <name type="scientific">Peptoniphilus asaccharolyticus</name>
    <name type="common">Peptostreptococcus asaccharolyticus</name>
    <dbReference type="NCBI Taxonomy" id="1258"/>
    <lineage>
        <taxon>Bacteria</taxon>
        <taxon>Bacillati</taxon>
        <taxon>Bacillota</taxon>
        <taxon>Tissierellia</taxon>
        <taxon>Tissierellales</taxon>
        <taxon>Peptoniphilaceae</taxon>
        <taxon>Peptoniphilus</taxon>
    </lineage>
</organism>
<keyword id="KW-0002">3D-structure</keyword>
<keyword id="KW-0520">NAD</keyword>
<keyword id="KW-0560">Oxidoreductase</keyword>
<reference key="1">
    <citation type="journal article" date="1991" name="J. Bacteriol.">
        <title>Selection, expression, and nucleotide sequencing of the glutamate dehydrogenase gene of Peptostreptococcus asaccharolyticus.</title>
        <authorList>
            <person name="Snedecor B."/>
            <person name="Chu H."/>
            <person name="Chen E.Y."/>
        </authorList>
    </citation>
    <scope>NUCLEOTIDE SEQUENCE [GENOMIC DNA]</scope>
    <source>
        <strain>ATCC 14963 / DSM 20463 / JCM 1765 / NCIMB 10074 / NCTC 11461 / UW 228</strain>
    </source>
</reference>
<reference key="2">
    <citation type="journal article" date="2007" name="FEBS J.">
        <title>Probing the determinants of coenzyme specificity in Peptostreptococcus asaccharolyticus glutamate dehydrogenase by site-directed mutagenesis.</title>
        <authorList>
            <person name="Carrigan J.B."/>
            <person name="Engel P.C."/>
        </authorList>
    </citation>
    <scope>FUNCTION AS A GLUTAMATE DEHYDROGENASE</scope>
    <scope>CATALYTIC ACTIVITY</scope>
    <scope>MUTAGENESIS OF GLU-243; TRP-244 AND ASP-245</scope>
    <scope>BIOPHYSICOCHEMICAL PROPERTIES</scope>
    <scope>COENZYME SPECIFICITY</scope>
    <source>
        <strain>ATCC 14963 / DSM 20463 / JCM 1765 / NCIMB 10074 / NCTC 11461 / UW 228</strain>
    </source>
</reference>
<reference evidence="6" key="3">
    <citation type="journal article" date="2012" name="J. Struct. Biol.">
        <title>Crystal structure of NAD+-dependent Peptoniphilus asaccharolyticus glutamate dehydrogenase reveals determinants of cofactor specificity.</title>
        <authorList>
            <person name="Oliveira T."/>
            <person name="Panjikar S."/>
            <person name="Carrigan J.B."/>
            <person name="Hamza M."/>
            <person name="Sharkey M.A."/>
            <person name="Engel P.C."/>
            <person name="Khan A.R."/>
        </authorList>
    </citation>
    <scope>X-RAY CRYSTALLOGRAPHY (2.94 ANGSTROMS)</scope>
    <scope>COENZYME SPECIFICITY</scope>
    <scope>MUTAGENESIS OF GLU-243</scope>
    <scope>SUBUNIT</scope>
</reference>
<comment type="catalytic activity">
    <reaction evidence="3">
        <text>L-glutamate + NAD(+) + H2O = 2-oxoglutarate + NH4(+) + NADH + H(+)</text>
        <dbReference type="Rhea" id="RHEA:15133"/>
        <dbReference type="ChEBI" id="CHEBI:15377"/>
        <dbReference type="ChEBI" id="CHEBI:15378"/>
        <dbReference type="ChEBI" id="CHEBI:16810"/>
        <dbReference type="ChEBI" id="CHEBI:28938"/>
        <dbReference type="ChEBI" id="CHEBI:29985"/>
        <dbReference type="ChEBI" id="CHEBI:57540"/>
        <dbReference type="ChEBI" id="CHEBI:57945"/>
        <dbReference type="EC" id="1.4.1.2"/>
    </reaction>
</comment>
<comment type="biophysicochemical properties">
    <kinetics>
        <KM evidence="3">4.4 uM for NAD (at pH 7)</KM>
        <KM evidence="3">1640 uM for NADP (at pH 7)</KM>
        <text>These values indicate a 1165-fold discrimination in favor of NADH.</text>
    </kinetics>
</comment>
<comment type="pathway">
    <text>Amino-acid degradation; L-glutamate degradation via hydroxyglutarate pathway; crotonoyl-CoA from L-glutamate: step 1/5.</text>
</comment>
<comment type="subunit">
    <text evidence="4">Homohexamer.</text>
</comment>
<comment type="similarity">
    <text evidence="5">Belongs to the Glu/Leu/Phe/Val dehydrogenases family.</text>
</comment>
<evidence type="ECO:0000250" key="1"/>
<evidence type="ECO:0000255" key="2">
    <source>
        <dbReference type="PROSITE-ProRule" id="PRU10011"/>
    </source>
</evidence>
<evidence type="ECO:0000269" key="3">
    <source>
    </source>
</evidence>
<evidence type="ECO:0000269" key="4">
    <source>
    </source>
</evidence>
<evidence type="ECO:0000305" key="5"/>
<evidence type="ECO:0007744" key="6">
    <source>
        <dbReference type="PDB" id="2YFQ"/>
    </source>
</evidence>
<evidence type="ECO:0007829" key="7">
    <source>
        <dbReference type="PDB" id="2YFQ"/>
    </source>
</evidence>
<name>DHE2_PEPAS</name>
<sequence length="421" mass="46514">MTDTLNPLVAAQEKVRIACEKLGCDPAVYELLKEPQRVIEISIPVKMDDGTVKVFKGWRSAHSSAVGPSKGGVRFHPNVNMDEVKALSLWMTFKGGALGLPYGGGKGGICVDPAELSERELEQLSRGWVRGLYKYLGDRIDIPAPDVNTNGQIMSWFVDEYVKLNGERMDIGTFTGKPVAFGGSEGRNEATGFGVAVVVRESAKRFGIKMEDAKIAVQGFGNVGTFTVKNIERQGGKVCAIAEWDRNEGNYALYNENGIDFKELLAYKEANKTLIGFPGAERITDEEFWTKEYDIIVPAALENVITGERAKTINAKLVCEAANGPTTPEGDKVLTERGINLTPDILTNSGGVLVSYYEWVQNQYGYYWTEAEVEEKQEADMMKAIKGVFAVADEYNVTLREAVYMYAIKSIDVAMKLRGWY</sequence>
<dbReference type="EC" id="1.4.1.2" evidence="3"/>
<dbReference type="EMBL" id="M76403">
    <property type="protein sequence ID" value="AAA25611.1"/>
    <property type="molecule type" value="Genomic_DNA"/>
</dbReference>
<dbReference type="PIR" id="A38168">
    <property type="entry name" value="A38168"/>
</dbReference>
<dbReference type="PDB" id="2YFQ">
    <property type="method" value="X-ray"/>
    <property type="resolution" value="2.94 A"/>
    <property type="chains" value="A/B=1-421"/>
</dbReference>
<dbReference type="PDBsum" id="2YFQ"/>
<dbReference type="SMR" id="P28997"/>
<dbReference type="BioCyc" id="MetaCyc:MONOMER-1161"/>
<dbReference type="BRENDA" id="1.4.1.2">
    <property type="organism ID" value="4665"/>
</dbReference>
<dbReference type="UniPathway" id="UPA00533">
    <property type="reaction ID" value="UER00591"/>
</dbReference>
<dbReference type="EvolutionaryTrace" id="P28997"/>
<dbReference type="GO" id="GO:0004352">
    <property type="term" value="F:glutamate dehydrogenase (NAD+) activity"/>
    <property type="evidence" value="ECO:0000315"/>
    <property type="project" value="UniProtKB"/>
</dbReference>
<dbReference type="GO" id="GO:0006520">
    <property type="term" value="P:amino acid metabolic process"/>
    <property type="evidence" value="ECO:0000315"/>
    <property type="project" value="UniProtKB"/>
</dbReference>
<dbReference type="GO" id="GO:0019552">
    <property type="term" value="P:glutamate catabolic process via 2-hydroxyglutarate"/>
    <property type="evidence" value="ECO:0007669"/>
    <property type="project" value="UniProtKB-UniPathway"/>
</dbReference>
<dbReference type="CDD" id="cd01076">
    <property type="entry name" value="NAD_bind_1_Glu_DH"/>
    <property type="match status" value="1"/>
</dbReference>
<dbReference type="Gene3D" id="3.40.50.10860">
    <property type="entry name" value="Leucine Dehydrogenase, chain A, domain 1"/>
    <property type="match status" value="1"/>
</dbReference>
<dbReference type="Gene3D" id="3.40.50.720">
    <property type="entry name" value="NAD(P)-binding Rossmann-like Domain"/>
    <property type="match status" value="1"/>
</dbReference>
<dbReference type="InterPro" id="IPR046346">
    <property type="entry name" value="Aminoacid_DH-like_N_sf"/>
</dbReference>
<dbReference type="InterPro" id="IPR006095">
    <property type="entry name" value="Glu/Leu/Phe/Val/Trp_DH"/>
</dbReference>
<dbReference type="InterPro" id="IPR006096">
    <property type="entry name" value="Glu/Leu/Phe/Val/Trp_DH_C"/>
</dbReference>
<dbReference type="InterPro" id="IPR006097">
    <property type="entry name" value="Glu/Leu/Phe/Val/Trp_DH_dimer"/>
</dbReference>
<dbReference type="InterPro" id="IPR033524">
    <property type="entry name" value="Glu/Leu/Phe/Val_DH_AS"/>
</dbReference>
<dbReference type="InterPro" id="IPR014362">
    <property type="entry name" value="Glu_DH"/>
</dbReference>
<dbReference type="InterPro" id="IPR036291">
    <property type="entry name" value="NAD(P)-bd_dom_sf"/>
</dbReference>
<dbReference type="InterPro" id="IPR033922">
    <property type="entry name" value="NAD_bind_Glu_DH"/>
</dbReference>
<dbReference type="PANTHER" id="PTHR11606">
    <property type="entry name" value="GLUTAMATE DEHYDROGENASE"/>
    <property type="match status" value="1"/>
</dbReference>
<dbReference type="PANTHER" id="PTHR11606:SF13">
    <property type="entry name" value="GLUTAMATE DEHYDROGENASE 1, MITOCHONDRIAL"/>
    <property type="match status" value="1"/>
</dbReference>
<dbReference type="Pfam" id="PF00208">
    <property type="entry name" value="ELFV_dehydrog"/>
    <property type="match status" value="1"/>
</dbReference>
<dbReference type="Pfam" id="PF02812">
    <property type="entry name" value="ELFV_dehydrog_N"/>
    <property type="match status" value="1"/>
</dbReference>
<dbReference type="PIRSF" id="PIRSF000185">
    <property type="entry name" value="Glu_DH"/>
    <property type="match status" value="1"/>
</dbReference>
<dbReference type="PRINTS" id="PR00082">
    <property type="entry name" value="GLFDHDRGNASE"/>
</dbReference>
<dbReference type="SMART" id="SM00839">
    <property type="entry name" value="ELFV_dehydrog"/>
    <property type="match status" value="1"/>
</dbReference>
<dbReference type="SUPFAM" id="SSF53223">
    <property type="entry name" value="Aminoacid dehydrogenase-like, N-terminal domain"/>
    <property type="match status" value="1"/>
</dbReference>
<dbReference type="SUPFAM" id="SSF51735">
    <property type="entry name" value="NAD(P)-binding Rossmann-fold domains"/>
    <property type="match status" value="1"/>
</dbReference>
<dbReference type="PROSITE" id="PS00074">
    <property type="entry name" value="GLFV_DEHYDROGENASE"/>
    <property type="match status" value="1"/>
</dbReference>
<protein>
    <recommendedName>
        <fullName>NAD-specific glutamate dehydrogenase</fullName>
        <shortName>NAD-GDH</shortName>
        <ecNumber evidence="3">1.4.1.2</ecNumber>
    </recommendedName>
</protein>
<proteinExistence type="evidence at protein level"/>